<reference key="1">
    <citation type="submission" date="2006-09" db="EMBL/GenBank/DDBJ databases">
        <title>Complete sequence of chromosome 1 of Shewanella sp. ANA-3.</title>
        <authorList>
            <person name="Copeland A."/>
            <person name="Lucas S."/>
            <person name="Lapidus A."/>
            <person name="Barry K."/>
            <person name="Detter J.C."/>
            <person name="Glavina del Rio T."/>
            <person name="Hammon N."/>
            <person name="Israni S."/>
            <person name="Dalin E."/>
            <person name="Tice H."/>
            <person name="Pitluck S."/>
            <person name="Chertkov O."/>
            <person name="Brettin T."/>
            <person name="Bruce D."/>
            <person name="Han C."/>
            <person name="Tapia R."/>
            <person name="Gilna P."/>
            <person name="Schmutz J."/>
            <person name="Larimer F."/>
            <person name="Land M."/>
            <person name="Hauser L."/>
            <person name="Kyrpides N."/>
            <person name="Kim E."/>
            <person name="Newman D."/>
            <person name="Salticov C."/>
            <person name="Konstantinidis K."/>
            <person name="Klappenback J."/>
            <person name="Tiedje J."/>
            <person name="Richardson P."/>
        </authorList>
    </citation>
    <scope>NUCLEOTIDE SEQUENCE [LARGE SCALE GENOMIC DNA]</scope>
    <source>
        <strain>ANA-3</strain>
    </source>
</reference>
<feature type="chain" id="PRO_1000088186" description="4-hydroxybenzoate octaprenyltransferase">
    <location>
        <begin position="1"/>
        <end position="286"/>
    </location>
</feature>
<feature type="transmembrane region" description="Helical" evidence="1">
    <location>
        <begin position="21"/>
        <end position="40"/>
    </location>
</feature>
<feature type="transmembrane region" description="Helical" evidence="1">
    <location>
        <begin position="96"/>
        <end position="116"/>
    </location>
</feature>
<feature type="transmembrane region" description="Helical" evidence="1">
    <location>
        <begin position="142"/>
        <end position="162"/>
    </location>
</feature>
<feature type="transmembrane region" description="Helical" evidence="1">
    <location>
        <begin position="167"/>
        <end position="187"/>
    </location>
</feature>
<feature type="transmembrane region" description="Helical" evidence="1">
    <location>
        <begin position="210"/>
        <end position="230"/>
    </location>
</feature>
<feature type="transmembrane region" description="Helical" evidence="1">
    <location>
        <begin position="235"/>
        <end position="255"/>
    </location>
</feature>
<feature type="transmembrane region" description="Helical" evidence="1">
    <location>
        <begin position="266"/>
        <end position="286"/>
    </location>
</feature>
<dbReference type="EC" id="2.5.1.39" evidence="1"/>
<dbReference type="EMBL" id="CP000469">
    <property type="protein sequence ID" value="ABK46711.1"/>
    <property type="molecule type" value="Genomic_DNA"/>
</dbReference>
<dbReference type="RefSeq" id="WP_011715678.1">
    <property type="nucleotide sequence ID" value="NC_008577.1"/>
</dbReference>
<dbReference type="SMR" id="A0KSE2"/>
<dbReference type="STRING" id="94122.Shewana3_0470"/>
<dbReference type="KEGG" id="shn:Shewana3_0470"/>
<dbReference type="eggNOG" id="COG0382">
    <property type="taxonomic scope" value="Bacteria"/>
</dbReference>
<dbReference type="HOGENOM" id="CLU_034879_1_0_6"/>
<dbReference type="OrthoDB" id="9782418at2"/>
<dbReference type="UniPathway" id="UPA00232"/>
<dbReference type="Proteomes" id="UP000002589">
    <property type="component" value="Chromosome"/>
</dbReference>
<dbReference type="GO" id="GO:0005886">
    <property type="term" value="C:plasma membrane"/>
    <property type="evidence" value="ECO:0007669"/>
    <property type="project" value="UniProtKB-SubCell"/>
</dbReference>
<dbReference type="GO" id="GO:0008412">
    <property type="term" value="F:4-hydroxybenzoate polyprenyltransferase activity"/>
    <property type="evidence" value="ECO:0007669"/>
    <property type="project" value="UniProtKB-UniRule"/>
</dbReference>
<dbReference type="GO" id="GO:0006744">
    <property type="term" value="P:ubiquinone biosynthetic process"/>
    <property type="evidence" value="ECO:0007669"/>
    <property type="project" value="UniProtKB-UniRule"/>
</dbReference>
<dbReference type="CDD" id="cd13959">
    <property type="entry name" value="PT_UbiA_COQ2"/>
    <property type="match status" value="1"/>
</dbReference>
<dbReference type="FunFam" id="1.10.357.140:FF:000002">
    <property type="entry name" value="4-hydroxybenzoate octaprenyltransferase"/>
    <property type="match status" value="1"/>
</dbReference>
<dbReference type="FunFam" id="1.20.120.1780:FF:000001">
    <property type="entry name" value="4-hydroxybenzoate octaprenyltransferase"/>
    <property type="match status" value="1"/>
</dbReference>
<dbReference type="Gene3D" id="1.10.357.140">
    <property type="entry name" value="UbiA prenyltransferase"/>
    <property type="match status" value="1"/>
</dbReference>
<dbReference type="Gene3D" id="1.20.120.1780">
    <property type="entry name" value="UbiA prenyltransferase"/>
    <property type="match status" value="1"/>
</dbReference>
<dbReference type="HAMAP" id="MF_01635">
    <property type="entry name" value="UbiA"/>
    <property type="match status" value="1"/>
</dbReference>
<dbReference type="InterPro" id="IPR006370">
    <property type="entry name" value="HB_polyprenyltransferase-like"/>
</dbReference>
<dbReference type="InterPro" id="IPR039653">
    <property type="entry name" value="Prenyltransferase"/>
</dbReference>
<dbReference type="InterPro" id="IPR000537">
    <property type="entry name" value="UbiA_prenyltransferase"/>
</dbReference>
<dbReference type="InterPro" id="IPR030470">
    <property type="entry name" value="UbiA_prenylTrfase_CS"/>
</dbReference>
<dbReference type="InterPro" id="IPR044878">
    <property type="entry name" value="UbiA_sf"/>
</dbReference>
<dbReference type="NCBIfam" id="TIGR01474">
    <property type="entry name" value="ubiA_proteo"/>
    <property type="match status" value="1"/>
</dbReference>
<dbReference type="PANTHER" id="PTHR11048:SF28">
    <property type="entry name" value="4-HYDROXYBENZOATE POLYPRENYLTRANSFERASE, MITOCHONDRIAL"/>
    <property type="match status" value="1"/>
</dbReference>
<dbReference type="PANTHER" id="PTHR11048">
    <property type="entry name" value="PRENYLTRANSFERASES"/>
    <property type="match status" value="1"/>
</dbReference>
<dbReference type="Pfam" id="PF01040">
    <property type="entry name" value="UbiA"/>
    <property type="match status" value="1"/>
</dbReference>
<dbReference type="PROSITE" id="PS00943">
    <property type="entry name" value="UBIA"/>
    <property type="match status" value="1"/>
</dbReference>
<accession>A0KSE2</accession>
<sequence length="286" mass="31899">MNLKQKWDVYSRLTRLDRPIGTLLLLWPCLMALVLAAGGMPDIKVLIIFIIGVVIMRACGCIINDYADRDLDSHVERTKSRPLASGEISTKEALLLFVILGLAAFGLVLLLNGLVVKLSVVGIILTIIYPFTKRVTNMPQMFLGVVWSWSIPMAYAAQTGEVPIEAWWLFAANWFWTVAYDTMYAMVDRDDDLKVGIKSTAILFGKYDRQIIGLFQLAALLCFIAAGWSADRGLLYGLGLLTFVGFSTYQQMLIFGRERAPCFKAFLNNNWAGLALFVGLGADYLF</sequence>
<evidence type="ECO:0000255" key="1">
    <source>
        <dbReference type="HAMAP-Rule" id="MF_01635"/>
    </source>
</evidence>
<protein>
    <recommendedName>
        <fullName evidence="1">4-hydroxybenzoate octaprenyltransferase</fullName>
        <ecNumber evidence="1">2.5.1.39</ecNumber>
    </recommendedName>
    <alternativeName>
        <fullName evidence="1">4-HB polyprenyltransferase</fullName>
    </alternativeName>
</protein>
<proteinExistence type="inferred from homology"/>
<keyword id="KW-0997">Cell inner membrane</keyword>
<keyword id="KW-1003">Cell membrane</keyword>
<keyword id="KW-0460">Magnesium</keyword>
<keyword id="KW-0472">Membrane</keyword>
<keyword id="KW-0808">Transferase</keyword>
<keyword id="KW-0812">Transmembrane</keyword>
<keyword id="KW-1133">Transmembrane helix</keyword>
<keyword id="KW-0831">Ubiquinone biosynthesis</keyword>
<gene>
    <name evidence="1" type="primary">ubiA</name>
    <name type="ordered locus">Shewana3_0470</name>
</gene>
<name>UBIA_SHESA</name>
<organism>
    <name type="scientific">Shewanella sp. (strain ANA-3)</name>
    <dbReference type="NCBI Taxonomy" id="94122"/>
    <lineage>
        <taxon>Bacteria</taxon>
        <taxon>Pseudomonadati</taxon>
        <taxon>Pseudomonadota</taxon>
        <taxon>Gammaproteobacteria</taxon>
        <taxon>Alteromonadales</taxon>
        <taxon>Shewanellaceae</taxon>
        <taxon>Shewanella</taxon>
    </lineage>
</organism>
<comment type="function">
    <text evidence="1">Catalyzes the prenylation of para-hydroxybenzoate (PHB) with an all-trans polyprenyl group. Mediates the second step in the final reaction sequence of ubiquinone-8 (UQ-8) biosynthesis, which is the condensation of the polyisoprenoid side chain with PHB, generating the first membrane-bound Q intermediate 3-octaprenyl-4-hydroxybenzoate.</text>
</comment>
<comment type="catalytic activity">
    <reaction evidence="1">
        <text>all-trans-octaprenyl diphosphate + 4-hydroxybenzoate = 4-hydroxy-3-(all-trans-octaprenyl)benzoate + diphosphate</text>
        <dbReference type="Rhea" id="RHEA:27782"/>
        <dbReference type="ChEBI" id="CHEBI:1617"/>
        <dbReference type="ChEBI" id="CHEBI:17879"/>
        <dbReference type="ChEBI" id="CHEBI:33019"/>
        <dbReference type="ChEBI" id="CHEBI:57711"/>
        <dbReference type="EC" id="2.5.1.39"/>
    </reaction>
</comment>
<comment type="cofactor">
    <cofactor evidence="1">
        <name>Mg(2+)</name>
        <dbReference type="ChEBI" id="CHEBI:18420"/>
    </cofactor>
</comment>
<comment type="pathway">
    <text evidence="1">Cofactor biosynthesis; ubiquinone biosynthesis.</text>
</comment>
<comment type="subcellular location">
    <subcellularLocation>
        <location evidence="1">Cell inner membrane</location>
        <topology evidence="1">Multi-pass membrane protein</topology>
    </subcellularLocation>
</comment>
<comment type="similarity">
    <text evidence="1">Belongs to the UbiA prenyltransferase family.</text>
</comment>